<sequence length="584" mass="67191">MTKRKKEVIDVDCSEKKDFVIDWSSAMDKEDEVPELEIVNTTKPTPPPPPTFFSDDQTDSPKLLTDRDLDEQLERKKAILTLGPGLPDKGEKIRLKIADLEEEKQRRVLEGSKMEVDRSSKVVSSTSSGSDVLPQGNAVSKDTSRGNADSKDTSRQGNADSKEVSRSTFSAVFSKPKTDSQSKKAFGKELEDLGCERRKHKAGRKPVTRLSNGWRLLPDVGKAEHSAKQFDSGLKESKGNKKSKEPYGKKRPMESSTYSLIDDDDDDDDDDDNDTSGHETPREWSWEKSPSQSSRRRKKSEDTVINVDEEEAQPSTVAEQAAELPEGLQEDICYPTRDDPHFVQVCLKDLECLAPREYLTSPVMNFYMRFLQQQISSSNQISADCHFFNTYFYKKLSDAVTYKGNDKDAFFVRFRRWWKGIDLFRKAYIFIPIHEDLHWSLVIVCIPDKKDESGLTILHLDSLGLHSRKSIVENVKRFLKDEWNYLNQDDYSLDLPISEKVWKNLPRRISEAVVQVPQQKNDFDCGPFVLFFIKRFIEEAPQRLKRKDLGMFDKKWFRPDEASALRIKIRNTLIELFRVSDQTE</sequence>
<protein>
    <recommendedName>
        <fullName>Ubiquitin-like-specific protease 1D</fullName>
        <ecNumber>3.4.22.-</ecNumber>
    </recommendedName>
    <alternativeName>
        <fullName>Protein OVERLY TOLERANT TO SALT 1</fullName>
    </alternativeName>
</protein>
<name>ULP1D_ARATH</name>
<comment type="function">
    <text evidence="3 4 5">Protease that catalyzes two essential functions in the SUMO pathway: processing of full-length SUMOs to their mature forms and deconjugation of SUMO from targeted proteins. Cleaves precursors of SUM1 and SUM2, but not of SUM3 or SUM5. Able to release SUM1 and SUM2 from conjugates, but unable to cleave SUM3. Protease activity mainly directed at deconjugating SUM1 and SUM2 from their target proteins. Regulates salt stress responses and flowering time. Redundant with ULP1C.</text>
</comment>
<comment type="subcellular location">
    <subcellularLocation>
        <location evidence="5">Nucleus speckle</location>
    </subcellularLocation>
</comment>
<comment type="induction">
    <text evidence="5">Constitutively expressed. Proteasomally degraded upon salt stress.</text>
</comment>
<comment type="domain">
    <text>The N-terminal regulatory domain is not required for peptidase activity in vitro.</text>
</comment>
<comment type="disruption phenotype">
    <text evidence="5">No visible phenotype in terms of overall growth, salt sensitivity and flowering time. Early flowering time and salt sensitivity in ulp1d/ots1 and ulp1c/ots2 double mutants.</text>
</comment>
<comment type="similarity">
    <text evidence="6">Belongs to the peptidase C48 family.</text>
</comment>
<comment type="sequence caution" evidence="6">
    <conflict type="erroneous gene model prediction">
        <sequence resource="EMBL-CDS" id="AAC24055"/>
    </conflict>
</comment>
<keyword id="KW-0378">Hydrolase</keyword>
<keyword id="KW-0539">Nucleus</keyword>
<keyword id="KW-0645">Protease</keyword>
<keyword id="KW-1185">Reference proteome</keyword>
<keyword id="KW-0788">Thiol protease</keyword>
<keyword id="KW-0833">Ubl conjugation pathway</keyword>
<reference key="1">
    <citation type="journal article" date="2006" name="Plant Physiol.">
        <title>SUMO-conjugating and SUMO-deconjugating enzymes from Arabidopsis.</title>
        <authorList>
            <person name="Colby T."/>
            <person name="Matthai A."/>
            <person name="Boeckelmann A."/>
            <person name="Stuible H.P."/>
        </authorList>
    </citation>
    <scope>NUCLEOTIDE SEQUENCE [MRNA]</scope>
    <scope>FUNCTION</scope>
    <scope>GENE FAMILY</scope>
    <scope>NOMENCLATURE</scope>
</reference>
<reference key="2">
    <citation type="journal article" date="2000" name="Nature">
        <title>Sequence and analysis of chromosome 1 of the plant Arabidopsis thaliana.</title>
        <authorList>
            <person name="Theologis A."/>
            <person name="Ecker J.R."/>
            <person name="Palm C.J."/>
            <person name="Federspiel N.A."/>
            <person name="Kaul S."/>
            <person name="White O."/>
            <person name="Alonso J."/>
            <person name="Altafi H."/>
            <person name="Araujo R."/>
            <person name="Bowman C.L."/>
            <person name="Brooks S.Y."/>
            <person name="Buehler E."/>
            <person name="Chan A."/>
            <person name="Chao Q."/>
            <person name="Chen H."/>
            <person name="Cheuk R.F."/>
            <person name="Chin C.W."/>
            <person name="Chung M.K."/>
            <person name="Conn L."/>
            <person name="Conway A.B."/>
            <person name="Conway A.R."/>
            <person name="Creasy T.H."/>
            <person name="Dewar K."/>
            <person name="Dunn P."/>
            <person name="Etgu P."/>
            <person name="Feldblyum T.V."/>
            <person name="Feng J.-D."/>
            <person name="Fong B."/>
            <person name="Fujii C.Y."/>
            <person name="Gill J.E."/>
            <person name="Goldsmith A.D."/>
            <person name="Haas B."/>
            <person name="Hansen N.F."/>
            <person name="Hughes B."/>
            <person name="Huizar L."/>
            <person name="Hunter J.L."/>
            <person name="Jenkins J."/>
            <person name="Johnson-Hopson C."/>
            <person name="Khan S."/>
            <person name="Khaykin E."/>
            <person name="Kim C.J."/>
            <person name="Koo H.L."/>
            <person name="Kremenetskaia I."/>
            <person name="Kurtz D.B."/>
            <person name="Kwan A."/>
            <person name="Lam B."/>
            <person name="Langin-Hooper S."/>
            <person name="Lee A."/>
            <person name="Lee J.M."/>
            <person name="Lenz C.A."/>
            <person name="Li J.H."/>
            <person name="Li Y.-P."/>
            <person name="Lin X."/>
            <person name="Liu S.X."/>
            <person name="Liu Z.A."/>
            <person name="Luros J.S."/>
            <person name="Maiti R."/>
            <person name="Marziali A."/>
            <person name="Militscher J."/>
            <person name="Miranda M."/>
            <person name="Nguyen M."/>
            <person name="Nierman W.C."/>
            <person name="Osborne B.I."/>
            <person name="Pai G."/>
            <person name="Peterson J."/>
            <person name="Pham P.K."/>
            <person name="Rizzo M."/>
            <person name="Rooney T."/>
            <person name="Rowley D."/>
            <person name="Sakano H."/>
            <person name="Salzberg S.L."/>
            <person name="Schwartz J.R."/>
            <person name="Shinn P."/>
            <person name="Southwick A.M."/>
            <person name="Sun H."/>
            <person name="Tallon L.J."/>
            <person name="Tambunga G."/>
            <person name="Toriumi M.J."/>
            <person name="Town C.D."/>
            <person name="Utterback T."/>
            <person name="Van Aken S."/>
            <person name="Vaysberg M."/>
            <person name="Vysotskaia V.S."/>
            <person name="Walker M."/>
            <person name="Wu D."/>
            <person name="Yu G."/>
            <person name="Fraser C.M."/>
            <person name="Venter J.C."/>
            <person name="Davis R.W."/>
        </authorList>
    </citation>
    <scope>NUCLEOTIDE SEQUENCE [LARGE SCALE GENOMIC DNA]</scope>
    <source>
        <strain>cv. Columbia</strain>
    </source>
</reference>
<reference key="3">
    <citation type="journal article" date="2017" name="Plant J.">
        <title>Araport11: a complete reannotation of the Arabidopsis thaliana reference genome.</title>
        <authorList>
            <person name="Cheng C.Y."/>
            <person name="Krishnakumar V."/>
            <person name="Chan A.P."/>
            <person name="Thibaud-Nissen F."/>
            <person name="Schobel S."/>
            <person name="Town C.D."/>
        </authorList>
    </citation>
    <scope>GENOME REANNOTATION</scope>
    <source>
        <strain>cv. Columbia</strain>
    </source>
</reference>
<reference key="4">
    <citation type="journal article" date="2003" name="J. Biol. Chem.">
        <title>The small ubiquitin-like modifier (SUMO) protein modification system in Arabidopsis. Accumulation of SUMO1 and -2 conjugates is increased by stress.</title>
        <authorList>
            <person name="Kurepa J."/>
            <person name="Walker J.M."/>
            <person name="Smalle J."/>
            <person name="Gosink M.M."/>
            <person name="Davis S.J."/>
            <person name="Durham T.L."/>
            <person name="Sung D.Y."/>
            <person name="Vierstra R.D."/>
        </authorList>
    </citation>
    <scope>IDENTIFICATION</scope>
    <scope>GENE FAMILY</scope>
    <scope>NOMENCLATURE</scope>
</reference>
<reference key="5">
    <citation type="journal article" date="2006" name="Biochem. J.">
        <title>Evolution of a signalling system that incorporates both redundancy and diversity: Arabidopsis SUMOylation.</title>
        <authorList>
            <person name="Chosed R."/>
            <person name="Mukherjee S."/>
            <person name="Lois L.M."/>
            <person name="Orth K."/>
        </authorList>
    </citation>
    <scope>FUNCTION</scope>
</reference>
<reference key="6">
    <citation type="journal article" date="2008" name="Plant Cell">
        <title>Small ubiquitin-like modifier proteases OVERLY TOLERANT TO SALT1 and -2 regulate salt stress responses in Arabidopsis.</title>
        <authorList>
            <person name="Conti L."/>
            <person name="Price G."/>
            <person name="O'Donnell E."/>
            <person name="Schwessinger B."/>
            <person name="Dominy P."/>
            <person name="Sadanandom A."/>
        </authorList>
    </citation>
    <scope>FUNCTION</scope>
    <scope>SUBCELLULAR LOCATION</scope>
    <scope>MUTAGENESIS OF CYS-525</scope>
    <scope>INDUCTION</scope>
    <scope>DISRUPTION PHENOTYPE</scope>
</reference>
<evidence type="ECO:0000250" key="1"/>
<evidence type="ECO:0000256" key="2">
    <source>
        <dbReference type="SAM" id="MobiDB-lite"/>
    </source>
</evidence>
<evidence type="ECO:0000269" key="3">
    <source>
    </source>
</evidence>
<evidence type="ECO:0000269" key="4">
    <source>
    </source>
</evidence>
<evidence type="ECO:0000269" key="5">
    <source>
    </source>
</evidence>
<evidence type="ECO:0000305" key="6"/>
<organism>
    <name type="scientific">Arabidopsis thaliana</name>
    <name type="common">Mouse-ear cress</name>
    <dbReference type="NCBI Taxonomy" id="3702"/>
    <lineage>
        <taxon>Eukaryota</taxon>
        <taxon>Viridiplantae</taxon>
        <taxon>Streptophyta</taxon>
        <taxon>Embryophyta</taxon>
        <taxon>Tracheophyta</taxon>
        <taxon>Spermatophyta</taxon>
        <taxon>Magnoliopsida</taxon>
        <taxon>eudicotyledons</taxon>
        <taxon>Gunneridae</taxon>
        <taxon>Pentapetalae</taxon>
        <taxon>rosids</taxon>
        <taxon>malvids</taxon>
        <taxon>Brassicales</taxon>
        <taxon>Brassicaceae</taxon>
        <taxon>Camelineae</taxon>
        <taxon>Arabidopsis</taxon>
    </lineage>
</organism>
<accession>Q2PS26</accession>
<accession>O80745</accession>
<gene>
    <name type="primary">ULP1D</name>
    <name type="synonym">OTS1</name>
    <name type="ordered locus">At1g60220</name>
    <name type="ORF">T13D8.11</name>
</gene>
<dbReference type="EC" id="3.4.22.-"/>
<dbReference type="EMBL" id="DQ304543">
    <property type="protein sequence ID" value="ABC02400.1"/>
    <property type="molecule type" value="mRNA"/>
</dbReference>
<dbReference type="EMBL" id="AC004473">
    <property type="protein sequence ID" value="AAC24055.1"/>
    <property type="status" value="ALT_SEQ"/>
    <property type="molecule type" value="Genomic_DNA"/>
</dbReference>
<dbReference type="EMBL" id="CP002684">
    <property type="protein sequence ID" value="AEE33667.1"/>
    <property type="molecule type" value="Genomic_DNA"/>
</dbReference>
<dbReference type="PIR" id="T02274">
    <property type="entry name" value="T02274"/>
</dbReference>
<dbReference type="RefSeq" id="NP_176228.3">
    <property type="nucleotide sequence ID" value="NM_104712.5"/>
</dbReference>
<dbReference type="SMR" id="Q2PS26"/>
<dbReference type="BioGRID" id="27541">
    <property type="interactions" value="2"/>
</dbReference>
<dbReference type="FunCoup" id="Q2PS26">
    <property type="interactions" value="1332"/>
</dbReference>
<dbReference type="STRING" id="3702.Q2PS26"/>
<dbReference type="MEROPS" id="C48.A04"/>
<dbReference type="GlyGen" id="Q2PS26">
    <property type="glycosylation" value="1 site"/>
</dbReference>
<dbReference type="PaxDb" id="3702-AT1G60220.1"/>
<dbReference type="ProteomicsDB" id="245309"/>
<dbReference type="EnsemblPlants" id="AT1G60220.1">
    <property type="protein sequence ID" value="AT1G60220.1"/>
    <property type="gene ID" value="AT1G60220"/>
</dbReference>
<dbReference type="GeneID" id="842317"/>
<dbReference type="Gramene" id="AT1G60220.1">
    <property type="protein sequence ID" value="AT1G60220.1"/>
    <property type="gene ID" value="AT1G60220"/>
</dbReference>
<dbReference type="KEGG" id="ath:AT1G60220"/>
<dbReference type="Araport" id="AT1G60220"/>
<dbReference type="TAIR" id="AT1G60220">
    <property type="gene designation" value="ULP1D"/>
</dbReference>
<dbReference type="eggNOG" id="KOG0779">
    <property type="taxonomic scope" value="Eukaryota"/>
</dbReference>
<dbReference type="HOGENOM" id="CLU_027032_0_0_1"/>
<dbReference type="InParanoid" id="Q2PS26"/>
<dbReference type="OMA" id="DECQILK"/>
<dbReference type="PhylomeDB" id="Q2PS26"/>
<dbReference type="PRO" id="PR:Q2PS26"/>
<dbReference type="Proteomes" id="UP000006548">
    <property type="component" value="Chromosome 1"/>
</dbReference>
<dbReference type="ExpressionAtlas" id="Q2PS26">
    <property type="expression patterns" value="baseline and differential"/>
</dbReference>
<dbReference type="GO" id="GO:0016607">
    <property type="term" value="C:nuclear speck"/>
    <property type="evidence" value="ECO:0007669"/>
    <property type="project" value="UniProtKB-SubCell"/>
</dbReference>
<dbReference type="GO" id="GO:0005634">
    <property type="term" value="C:nucleus"/>
    <property type="evidence" value="ECO:0000314"/>
    <property type="project" value="TAIR"/>
</dbReference>
<dbReference type="GO" id="GO:0016929">
    <property type="term" value="F:deSUMOylase activity"/>
    <property type="evidence" value="ECO:0000314"/>
    <property type="project" value="TAIR"/>
</dbReference>
<dbReference type="GO" id="GO:0070139">
    <property type="term" value="F:SUMO-specific endopeptidase activity"/>
    <property type="evidence" value="ECO:0000314"/>
    <property type="project" value="UniProtKB"/>
</dbReference>
<dbReference type="GO" id="GO:0016926">
    <property type="term" value="P:protein desumoylation"/>
    <property type="evidence" value="ECO:0000314"/>
    <property type="project" value="UniProtKB"/>
</dbReference>
<dbReference type="GO" id="GO:0006508">
    <property type="term" value="P:proteolysis"/>
    <property type="evidence" value="ECO:0007669"/>
    <property type="project" value="UniProtKB-KW"/>
</dbReference>
<dbReference type="GO" id="GO:0009651">
    <property type="term" value="P:response to salt stress"/>
    <property type="evidence" value="ECO:0000316"/>
    <property type="project" value="TAIR"/>
</dbReference>
<dbReference type="GO" id="GO:0010228">
    <property type="term" value="P:vegetative to reproductive phase transition of meristem"/>
    <property type="evidence" value="ECO:0000316"/>
    <property type="project" value="TAIR"/>
</dbReference>
<dbReference type="Gene3D" id="1.10.418.20">
    <property type="match status" value="1"/>
</dbReference>
<dbReference type="Gene3D" id="3.30.310.130">
    <property type="entry name" value="Ubiquitin-related"/>
    <property type="match status" value="1"/>
</dbReference>
<dbReference type="InterPro" id="IPR038765">
    <property type="entry name" value="Papain-like_cys_pep_sf"/>
</dbReference>
<dbReference type="InterPro" id="IPR003653">
    <property type="entry name" value="Peptidase_C48_C"/>
</dbReference>
<dbReference type="PANTHER" id="PTHR46915:SF2">
    <property type="entry name" value="UBIQUITIN-LIKE PROTEASE 4"/>
    <property type="match status" value="1"/>
</dbReference>
<dbReference type="PANTHER" id="PTHR46915">
    <property type="entry name" value="UBIQUITIN-LIKE PROTEASE 4-RELATED"/>
    <property type="match status" value="1"/>
</dbReference>
<dbReference type="Pfam" id="PF02902">
    <property type="entry name" value="Peptidase_C48"/>
    <property type="match status" value="1"/>
</dbReference>
<dbReference type="SUPFAM" id="SSF54001">
    <property type="entry name" value="Cysteine proteinases"/>
    <property type="match status" value="1"/>
</dbReference>
<dbReference type="PROSITE" id="PS50600">
    <property type="entry name" value="ULP_PROTEASE"/>
    <property type="match status" value="1"/>
</dbReference>
<feature type="chain" id="PRO_0000395971" description="Ubiquitin-like-specific protease 1D">
    <location>
        <begin position="1"/>
        <end position="584"/>
    </location>
</feature>
<feature type="region of interest" description="Disordered" evidence="2">
    <location>
        <begin position="28"/>
        <end position="64"/>
    </location>
</feature>
<feature type="region of interest" description="Disordered" evidence="2">
    <location>
        <begin position="99"/>
        <end position="323"/>
    </location>
</feature>
<feature type="compositionally biased region" description="Basic and acidic residues" evidence="2">
    <location>
        <begin position="99"/>
        <end position="120"/>
    </location>
</feature>
<feature type="compositionally biased region" description="Low complexity" evidence="2">
    <location>
        <begin position="121"/>
        <end position="132"/>
    </location>
</feature>
<feature type="compositionally biased region" description="Basic and acidic residues" evidence="2">
    <location>
        <begin position="142"/>
        <end position="165"/>
    </location>
</feature>
<feature type="compositionally biased region" description="Basic and acidic residues" evidence="2">
    <location>
        <begin position="176"/>
        <end position="196"/>
    </location>
</feature>
<feature type="compositionally biased region" description="Basic residues" evidence="2">
    <location>
        <begin position="197"/>
        <end position="207"/>
    </location>
</feature>
<feature type="compositionally biased region" description="Basic and acidic residues" evidence="2">
    <location>
        <begin position="221"/>
        <end position="253"/>
    </location>
</feature>
<feature type="compositionally biased region" description="Acidic residues" evidence="2">
    <location>
        <begin position="261"/>
        <end position="274"/>
    </location>
</feature>
<feature type="compositionally biased region" description="Basic and acidic residues" evidence="2">
    <location>
        <begin position="275"/>
        <end position="286"/>
    </location>
</feature>
<feature type="active site" evidence="1">
    <location>
        <position position="438"/>
    </location>
</feature>
<feature type="active site" evidence="1">
    <location>
        <position position="461"/>
    </location>
</feature>
<feature type="active site" evidence="1">
    <location>
        <position position="525"/>
    </location>
</feature>
<feature type="mutagenesis site" description="Loss of peptidase activity." evidence="5">
    <original>C</original>
    <variation>S</variation>
    <location>
        <position position="525"/>
    </location>
</feature>
<proteinExistence type="evidence at protein level"/>